<comment type="catalytic activity">
    <reaction evidence="1">
        <text>(2R)-3-phosphoglycerate + ATP = (2R)-3-phospho-glyceroyl phosphate + ADP</text>
        <dbReference type="Rhea" id="RHEA:14801"/>
        <dbReference type="ChEBI" id="CHEBI:30616"/>
        <dbReference type="ChEBI" id="CHEBI:57604"/>
        <dbReference type="ChEBI" id="CHEBI:58272"/>
        <dbReference type="ChEBI" id="CHEBI:456216"/>
        <dbReference type="EC" id="2.7.2.3"/>
    </reaction>
</comment>
<comment type="pathway">
    <text evidence="1">Carbohydrate degradation; glycolysis; pyruvate from D-glyceraldehyde 3-phosphate: step 2/5.</text>
</comment>
<comment type="subunit">
    <text evidence="1">Monomer.</text>
</comment>
<comment type="subcellular location">
    <subcellularLocation>
        <location evidence="1">Cytoplasm</location>
    </subcellularLocation>
</comment>
<comment type="similarity">
    <text evidence="1">Belongs to the phosphoglycerate kinase family.</text>
</comment>
<dbReference type="EC" id="2.7.2.3" evidence="1"/>
<dbReference type="EMBL" id="CP000046">
    <property type="protein sequence ID" value="AAW36395.1"/>
    <property type="molecule type" value="Genomic_DNA"/>
</dbReference>
<dbReference type="RefSeq" id="WP_001074749.1">
    <property type="nucleotide sequence ID" value="NZ_JBGOFO010000005.1"/>
</dbReference>
<dbReference type="SMR" id="Q5HHP4"/>
<dbReference type="KEGG" id="sac:SACOL0839"/>
<dbReference type="HOGENOM" id="CLU_025427_0_2_9"/>
<dbReference type="UniPathway" id="UPA00109">
    <property type="reaction ID" value="UER00185"/>
</dbReference>
<dbReference type="Proteomes" id="UP000000530">
    <property type="component" value="Chromosome"/>
</dbReference>
<dbReference type="GO" id="GO:0005829">
    <property type="term" value="C:cytosol"/>
    <property type="evidence" value="ECO:0007669"/>
    <property type="project" value="TreeGrafter"/>
</dbReference>
<dbReference type="GO" id="GO:0043531">
    <property type="term" value="F:ADP binding"/>
    <property type="evidence" value="ECO:0007669"/>
    <property type="project" value="TreeGrafter"/>
</dbReference>
<dbReference type="GO" id="GO:0005524">
    <property type="term" value="F:ATP binding"/>
    <property type="evidence" value="ECO:0007669"/>
    <property type="project" value="UniProtKB-KW"/>
</dbReference>
<dbReference type="GO" id="GO:0004618">
    <property type="term" value="F:phosphoglycerate kinase activity"/>
    <property type="evidence" value="ECO:0007669"/>
    <property type="project" value="UniProtKB-UniRule"/>
</dbReference>
<dbReference type="GO" id="GO:0006094">
    <property type="term" value="P:gluconeogenesis"/>
    <property type="evidence" value="ECO:0007669"/>
    <property type="project" value="TreeGrafter"/>
</dbReference>
<dbReference type="GO" id="GO:0006096">
    <property type="term" value="P:glycolytic process"/>
    <property type="evidence" value="ECO:0007669"/>
    <property type="project" value="UniProtKB-UniRule"/>
</dbReference>
<dbReference type="CDD" id="cd00318">
    <property type="entry name" value="Phosphoglycerate_kinase"/>
    <property type="match status" value="1"/>
</dbReference>
<dbReference type="FunFam" id="3.40.50.1260:FF:000001">
    <property type="entry name" value="Phosphoglycerate kinase"/>
    <property type="match status" value="1"/>
</dbReference>
<dbReference type="FunFam" id="3.40.50.1260:FF:000008">
    <property type="entry name" value="Phosphoglycerate kinase"/>
    <property type="match status" value="1"/>
</dbReference>
<dbReference type="Gene3D" id="3.40.50.1260">
    <property type="entry name" value="Phosphoglycerate kinase, N-terminal domain"/>
    <property type="match status" value="2"/>
</dbReference>
<dbReference type="HAMAP" id="MF_00145">
    <property type="entry name" value="Phosphoglyc_kinase"/>
    <property type="match status" value="1"/>
</dbReference>
<dbReference type="InterPro" id="IPR001576">
    <property type="entry name" value="Phosphoglycerate_kinase"/>
</dbReference>
<dbReference type="InterPro" id="IPR015911">
    <property type="entry name" value="Phosphoglycerate_kinase_CS"/>
</dbReference>
<dbReference type="InterPro" id="IPR015824">
    <property type="entry name" value="Phosphoglycerate_kinase_N"/>
</dbReference>
<dbReference type="InterPro" id="IPR036043">
    <property type="entry name" value="Phosphoglycerate_kinase_sf"/>
</dbReference>
<dbReference type="PANTHER" id="PTHR11406">
    <property type="entry name" value="PHOSPHOGLYCERATE KINASE"/>
    <property type="match status" value="1"/>
</dbReference>
<dbReference type="PANTHER" id="PTHR11406:SF23">
    <property type="entry name" value="PHOSPHOGLYCERATE KINASE 1, CHLOROPLASTIC-RELATED"/>
    <property type="match status" value="1"/>
</dbReference>
<dbReference type="Pfam" id="PF00162">
    <property type="entry name" value="PGK"/>
    <property type="match status" value="1"/>
</dbReference>
<dbReference type="PIRSF" id="PIRSF000724">
    <property type="entry name" value="Pgk"/>
    <property type="match status" value="1"/>
</dbReference>
<dbReference type="PRINTS" id="PR00477">
    <property type="entry name" value="PHGLYCKINASE"/>
</dbReference>
<dbReference type="SUPFAM" id="SSF53748">
    <property type="entry name" value="Phosphoglycerate kinase"/>
    <property type="match status" value="1"/>
</dbReference>
<dbReference type="PROSITE" id="PS00111">
    <property type="entry name" value="PGLYCERATE_KINASE"/>
    <property type="match status" value="1"/>
</dbReference>
<protein>
    <recommendedName>
        <fullName evidence="1">Phosphoglycerate kinase</fullName>
        <ecNumber evidence="1">2.7.2.3</ecNumber>
    </recommendedName>
</protein>
<evidence type="ECO:0000255" key="1">
    <source>
        <dbReference type="HAMAP-Rule" id="MF_00145"/>
    </source>
</evidence>
<accession>Q5HHP4</accession>
<sequence length="396" mass="42602">MAKKIVSDLDLKGKTVLVRADFNVPLKDGEITNDNRIVQALPTIQYIIEQGGKIVLFSHLGKVKEESDKAKLTLRPVAEDLSKKLDKEVVFVPETRGEKLEAAIKDLKEGDVLLVENTRYEDLDGKKESKNDPELGKYWASLGDVFVNDAFGTAHREHASNVGISTHLETAAGFLMDKEIKFIGGVVNDPHKPVVAILGGAKVSDKINVIKNLVNIADKIIIGGGMAYTFLKAQGKEIGISLLEEDKIDFAKDLLEKHGDKIVLPVDTKVAKEFSNDAKITVVPSDSIPADQEGMDIGPNTVKLFADELEGAHTVVWNGPMGVFEFSNFAQGTIGVCKAIANLKDAITIIGGGDSAAAAISLGFENDFTHISTGGGASLEYLEGKELPGIKAINNK</sequence>
<name>PGK_STAAC</name>
<keyword id="KW-0067">ATP-binding</keyword>
<keyword id="KW-0963">Cytoplasm</keyword>
<keyword id="KW-0324">Glycolysis</keyword>
<keyword id="KW-0418">Kinase</keyword>
<keyword id="KW-0547">Nucleotide-binding</keyword>
<keyword id="KW-0808">Transferase</keyword>
<feature type="chain" id="PRO_0000146001" description="Phosphoglycerate kinase">
    <location>
        <begin position="1"/>
        <end position="396"/>
    </location>
</feature>
<feature type="binding site" evidence="1">
    <location>
        <begin position="21"/>
        <end position="23"/>
    </location>
    <ligand>
        <name>substrate</name>
    </ligand>
</feature>
<feature type="binding site" evidence="1">
    <location>
        <position position="36"/>
    </location>
    <ligand>
        <name>substrate</name>
    </ligand>
</feature>
<feature type="binding site" evidence="1">
    <location>
        <begin position="59"/>
        <end position="62"/>
    </location>
    <ligand>
        <name>substrate</name>
    </ligand>
</feature>
<feature type="binding site" evidence="1">
    <location>
        <position position="119"/>
    </location>
    <ligand>
        <name>substrate</name>
    </ligand>
</feature>
<feature type="binding site" evidence="1">
    <location>
        <position position="156"/>
    </location>
    <ligand>
        <name>substrate</name>
    </ligand>
</feature>
<feature type="binding site" evidence="1">
    <location>
        <position position="206"/>
    </location>
    <ligand>
        <name>ATP</name>
        <dbReference type="ChEBI" id="CHEBI:30616"/>
    </ligand>
</feature>
<feature type="binding site" evidence="1">
    <location>
        <position position="294"/>
    </location>
    <ligand>
        <name>ATP</name>
        <dbReference type="ChEBI" id="CHEBI:30616"/>
    </ligand>
</feature>
<feature type="binding site" evidence="1">
    <location>
        <position position="325"/>
    </location>
    <ligand>
        <name>ATP</name>
        <dbReference type="ChEBI" id="CHEBI:30616"/>
    </ligand>
</feature>
<feature type="binding site" evidence="1">
    <location>
        <begin position="352"/>
        <end position="355"/>
    </location>
    <ligand>
        <name>ATP</name>
        <dbReference type="ChEBI" id="CHEBI:30616"/>
    </ligand>
</feature>
<gene>
    <name evidence="1" type="primary">pgk</name>
    <name type="ordered locus">SACOL0839</name>
</gene>
<organism>
    <name type="scientific">Staphylococcus aureus (strain COL)</name>
    <dbReference type="NCBI Taxonomy" id="93062"/>
    <lineage>
        <taxon>Bacteria</taxon>
        <taxon>Bacillati</taxon>
        <taxon>Bacillota</taxon>
        <taxon>Bacilli</taxon>
        <taxon>Bacillales</taxon>
        <taxon>Staphylococcaceae</taxon>
        <taxon>Staphylococcus</taxon>
    </lineage>
</organism>
<proteinExistence type="inferred from homology"/>
<reference key="1">
    <citation type="journal article" date="2005" name="J. Bacteriol.">
        <title>Insights on evolution of virulence and resistance from the complete genome analysis of an early methicillin-resistant Staphylococcus aureus strain and a biofilm-producing methicillin-resistant Staphylococcus epidermidis strain.</title>
        <authorList>
            <person name="Gill S.R."/>
            <person name="Fouts D.E."/>
            <person name="Archer G.L."/>
            <person name="Mongodin E.F."/>
            <person name="DeBoy R.T."/>
            <person name="Ravel J."/>
            <person name="Paulsen I.T."/>
            <person name="Kolonay J.F."/>
            <person name="Brinkac L.M."/>
            <person name="Beanan M.J."/>
            <person name="Dodson R.J."/>
            <person name="Daugherty S.C."/>
            <person name="Madupu R."/>
            <person name="Angiuoli S.V."/>
            <person name="Durkin A.S."/>
            <person name="Haft D.H."/>
            <person name="Vamathevan J.J."/>
            <person name="Khouri H."/>
            <person name="Utterback T.R."/>
            <person name="Lee C."/>
            <person name="Dimitrov G."/>
            <person name="Jiang L."/>
            <person name="Qin H."/>
            <person name="Weidman J."/>
            <person name="Tran K."/>
            <person name="Kang K.H."/>
            <person name="Hance I.R."/>
            <person name="Nelson K.E."/>
            <person name="Fraser C.M."/>
        </authorList>
    </citation>
    <scope>NUCLEOTIDE SEQUENCE [LARGE SCALE GENOMIC DNA]</scope>
    <source>
        <strain>COL</strain>
    </source>
</reference>